<protein>
    <recommendedName>
        <fullName>U3 small nucleolar RNA-associated protein 21 homolog</fullName>
        <shortName>U3 snoRNA-associated protein 21</shortName>
    </recommendedName>
</protein>
<keyword id="KW-0539">Nucleus</keyword>
<keyword id="KW-1185">Reference proteome</keyword>
<keyword id="KW-0677">Repeat</keyword>
<keyword id="KW-0687">Ribonucleoprotein</keyword>
<keyword id="KW-0690">Ribosome biogenesis</keyword>
<keyword id="KW-0853">WD repeat</keyword>
<comment type="function">
    <text evidence="1">Involved in nucleolar processing of pre-18S ribosomal RNA and ribosome assembly.</text>
</comment>
<comment type="subunit">
    <text evidence="1">Interacts with snoRNA U3. Interacts with MPP10. Component of the ribosomal small subunit (SSU) processome composed of at least 40 protein subunits and snoRNA U3 (By similarity).</text>
</comment>
<comment type="subcellular location">
    <subcellularLocation>
        <location evidence="1">Nucleus</location>
        <location evidence="1">Nucleolus</location>
    </subcellularLocation>
</comment>
<comment type="domain">
    <text evidence="1">The WD repeats are grouped into two tandem seven-bladed beta-propeller regions.</text>
</comment>
<organism>
    <name type="scientific">Schizosaccharomyces pombe (strain 972 / ATCC 24843)</name>
    <name type="common">Fission yeast</name>
    <dbReference type="NCBI Taxonomy" id="284812"/>
    <lineage>
        <taxon>Eukaryota</taxon>
        <taxon>Fungi</taxon>
        <taxon>Dikarya</taxon>
        <taxon>Ascomycota</taxon>
        <taxon>Taphrinomycotina</taxon>
        <taxon>Schizosaccharomycetes</taxon>
        <taxon>Schizosaccharomycetales</taxon>
        <taxon>Schizosaccharomycetaceae</taxon>
        <taxon>Schizosaccharomyces</taxon>
    </lineage>
</organism>
<reference key="1">
    <citation type="journal article" date="2002" name="Nature">
        <title>The genome sequence of Schizosaccharomyces pombe.</title>
        <authorList>
            <person name="Wood V."/>
            <person name="Gwilliam R."/>
            <person name="Rajandream M.A."/>
            <person name="Lyne M.H."/>
            <person name="Lyne R."/>
            <person name="Stewart A."/>
            <person name="Sgouros J.G."/>
            <person name="Peat N."/>
            <person name="Hayles J."/>
            <person name="Baker S.G."/>
            <person name="Basham D."/>
            <person name="Bowman S."/>
            <person name="Brooks K."/>
            <person name="Brown D."/>
            <person name="Brown S."/>
            <person name="Chillingworth T."/>
            <person name="Churcher C.M."/>
            <person name="Collins M."/>
            <person name="Connor R."/>
            <person name="Cronin A."/>
            <person name="Davis P."/>
            <person name="Feltwell T."/>
            <person name="Fraser A."/>
            <person name="Gentles S."/>
            <person name="Goble A."/>
            <person name="Hamlin N."/>
            <person name="Harris D.E."/>
            <person name="Hidalgo J."/>
            <person name="Hodgson G."/>
            <person name="Holroyd S."/>
            <person name="Hornsby T."/>
            <person name="Howarth S."/>
            <person name="Huckle E.J."/>
            <person name="Hunt S."/>
            <person name="Jagels K."/>
            <person name="James K.D."/>
            <person name="Jones L."/>
            <person name="Jones M."/>
            <person name="Leather S."/>
            <person name="McDonald S."/>
            <person name="McLean J."/>
            <person name="Mooney P."/>
            <person name="Moule S."/>
            <person name="Mungall K.L."/>
            <person name="Murphy L.D."/>
            <person name="Niblett D."/>
            <person name="Odell C."/>
            <person name="Oliver K."/>
            <person name="O'Neil S."/>
            <person name="Pearson D."/>
            <person name="Quail M.A."/>
            <person name="Rabbinowitsch E."/>
            <person name="Rutherford K.M."/>
            <person name="Rutter S."/>
            <person name="Saunders D."/>
            <person name="Seeger K."/>
            <person name="Sharp S."/>
            <person name="Skelton J."/>
            <person name="Simmonds M.N."/>
            <person name="Squares R."/>
            <person name="Squares S."/>
            <person name="Stevens K."/>
            <person name="Taylor K."/>
            <person name="Taylor R.G."/>
            <person name="Tivey A."/>
            <person name="Walsh S.V."/>
            <person name="Warren T."/>
            <person name="Whitehead S."/>
            <person name="Woodward J.R."/>
            <person name="Volckaert G."/>
            <person name="Aert R."/>
            <person name="Robben J."/>
            <person name="Grymonprez B."/>
            <person name="Weltjens I."/>
            <person name="Vanstreels E."/>
            <person name="Rieger M."/>
            <person name="Schaefer M."/>
            <person name="Mueller-Auer S."/>
            <person name="Gabel C."/>
            <person name="Fuchs M."/>
            <person name="Duesterhoeft A."/>
            <person name="Fritzc C."/>
            <person name="Holzer E."/>
            <person name="Moestl D."/>
            <person name="Hilbert H."/>
            <person name="Borzym K."/>
            <person name="Langer I."/>
            <person name="Beck A."/>
            <person name="Lehrach H."/>
            <person name="Reinhardt R."/>
            <person name="Pohl T.M."/>
            <person name="Eger P."/>
            <person name="Zimmermann W."/>
            <person name="Wedler H."/>
            <person name="Wambutt R."/>
            <person name="Purnelle B."/>
            <person name="Goffeau A."/>
            <person name="Cadieu E."/>
            <person name="Dreano S."/>
            <person name="Gloux S."/>
            <person name="Lelaure V."/>
            <person name="Mottier S."/>
            <person name="Galibert F."/>
            <person name="Aves S.J."/>
            <person name="Xiang Z."/>
            <person name="Hunt C."/>
            <person name="Moore K."/>
            <person name="Hurst S.M."/>
            <person name="Lucas M."/>
            <person name="Rochet M."/>
            <person name="Gaillardin C."/>
            <person name="Tallada V.A."/>
            <person name="Garzon A."/>
            <person name="Thode G."/>
            <person name="Daga R.R."/>
            <person name="Cruzado L."/>
            <person name="Jimenez J."/>
            <person name="Sanchez M."/>
            <person name="del Rey F."/>
            <person name="Benito J."/>
            <person name="Dominguez A."/>
            <person name="Revuelta J.L."/>
            <person name="Moreno S."/>
            <person name="Armstrong J."/>
            <person name="Forsburg S.L."/>
            <person name="Cerutti L."/>
            <person name="Lowe T."/>
            <person name="McCombie W.R."/>
            <person name="Paulsen I."/>
            <person name="Potashkin J."/>
            <person name="Shpakovski G.V."/>
            <person name="Ussery D."/>
            <person name="Barrell B.G."/>
            <person name="Nurse P."/>
        </authorList>
    </citation>
    <scope>NUCLEOTIDE SEQUENCE [LARGE SCALE GENOMIC DNA]</scope>
    <source>
        <strain>972 / ATCC 24843</strain>
    </source>
</reference>
<feature type="chain" id="PRO_0000051496" description="U3 small nucleolar RNA-associated protein 21 homolog">
    <location>
        <begin position="1"/>
        <end position="902"/>
    </location>
</feature>
<feature type="repeat" description="WD 1">
    <location>
        <begin position="40"/>
        <end position="71"/>
    </location>
</feature>
<feature type="repeat" description="WD 2">
    <location>
        <begin position="80"/>
        <end position="110"/>
    </location>
</feature>
<feature type="repeat" description="WD 3">
    <location>
        <begin position="119"/>
        <end position="154"/>
    </location>
</feature>
<feature type="repeat" description="WD 4">
    <location>
        <begin position="164"/>
        <end position="198"/>
    </location>
</feature>
<feature type="repeat" description="WD 5">
    <location>
        <begin position="206"/>
        <end position="243"/>
    </location>
</feature>
<feature type="repeat" description="WD 6">
    <location>
        <begin position="249"/>
        <end position="284"/>
    </location>
</feature>
<feature type="repeat" description="WD 7">
    <location>
        <begin position="289"/>
        <end position="332"/>
    </location>
</feature>
<feature type="repeat" description="WD 8">
    <location>
        <begin position="339"/>
        <end position="373"/>
    </location>
</feature>
<feature type="repeat" description="WD 9">
    <location>
        <begin position="399"/>
        <end position="438"/>
    </location>
</feature>
<feature type="repeat" description="WD 10">
    <location>
        <begin position="447"/>
        <end position="481"/>
    </location>
</feature>
<feature type="repeat" description="WD 11">
    <location>
        <begin position="492"/>
        <end position="528"/>
    </location>
</feature>
<feature type="repeat" description="WD 12">
    <location>
        <begin position="533"/>
        <end position="568"/>
    </location>
</feature>
<feature type="repeat" description="WD 13">
    <location>
        <begin position="570"/>
        <end position="611"/>
    </location>
</feature>
<feature type="repeat" description="WD 14">
    <location>
        <begin position="613"/>
        <end position="651"/>
    </location>
</feature>
<accession>O14053</accession>
<name>UTP21_SCHPO</name>
<evidence type="ECO:0000250" key="1"/>
<gene>
    <name type="ORF">SPCC1672.07</name>
</gene>
<sequence length="902" mass="100570">MPFAEKKRRTYENAVKPLRKSRIYAPFRSIGHVSNAVPFDIEARGTHFLVTTSVGNTFQTYDCEKLNLLFVGKQLDKEITCLKSFKDFMLVAAGSKIFAYKRGKIIWDIDVEQEHGTVTHLDAFGEWIIACTSSRHVYVWKHASKYSVPELHTTFLPNTNADITSLLHPSTYLNKILLGFSDGALQIWNLRVSKRVHEFQEFFGDGITSLTQAPVLDVLAVGTISGRIVIFNLKNGSILMEFKQDGQVLSCSFRTDGTPILASSNPIGDLSFWDLSKRRIQNVTYNAHFGSLPKIQFLNGQPILVTAGPDNSLKEWIFDSMDGAPRILRSRNGHYEPPSFVKFYGKSVHFLISAATDRSLRAVSLYQDSQSTELSQGSVISKAKKLNVRPEELKLPEITALSSSNTREKYWDNVLTAHKNDSSARTWNWKSKTLGQHVLPTSDGTSVRSVCVSCCGNFGLIGSSKGVVDVYNMQSGIKRKSFGQSSLSGKPVTAVMLDNVNRILVTASLDGILKFWDFNKGNLIDSLDVGSSITHAIYQHSSDLVAVACDDFGIRIVDVQTRKIVRELWGHSNRLTSFDFSDTGRWLVTASLDGTIRTWDLPTGHLIDSISTPSVCTSLTFAPTGDYLATTHVDQVGISLWTNLSMFKHVSTKALRLDDVVEVSAPSVSGEKGISVVEAALNVESNAEDEEDISYRTMDQLDPNLQTLSKLPRTQWQTLINLEAIKARNAPKEVPKVPEKAPFFLPSLKDQSEATVPKQPIATEISKPTAVASIKVSGTEFSTLLHGNDDDAFFEYLKSLGPAKIDLEIRSLDAYPPYEEFILFINIMTRRLSKRRDFELVQACMSVFTKSHEDVLLMHDTPEDTVPVFESLKAWESVHKEENQRLLDLVGYCSGILSFMRT</sequence>
<dbReference type="EMBL" id="CU329672">
    <property type="protein sequence ID" value="CAA20445.1"/>
    <property type="molecule type" value="Genomic_DNA"/>
</dbReference>
<dbReference type="PIR" id="T41051">
    <property type="entry name" value="T41051"/>
</dbReference>
<dbReference type="SMR" id="O14053"/>
<dbReference type="BioGRID" id="275867">
    <property type="interactions" value="11"/>
</dbReference>
<dbReference type="FunCoup" id="O14053">
    <property type="interactions" value="941"/>
</dbReference>
<dbReference type="IntAct" id="O14053">
    <property type="interactions" value="1"/>
</dbReference>
<dbReference type="STRING" id="284812.O14053"/>
<dbReference type="iPTMnet" id="O14053"/>
<dbReference type="PaxDb" id="4896-SPCC1672.07.1"/>
<dbReference type="EnsemblFungi" id="SPCC1672.07.1">
    <property type="protein sequence ID" value="SPCC1672.07.1:pep"/>
    <property type="gene ID" value="SPCC1672.07"/>
</dbReference>
<dbReference type="KEGG" id="spo:2539299"/>
<dbReference type="PomBase" id="SPCC1672.07"/>
<dbReference type="VEuPathDB" id="FungiDB:SPCC1672.07"/>
<dbReference type="eggNOG" id="KOG1539">
    <property type="taxonomic scope" value="Eukaryota"/>
</dbReference>
<dbReference type="HOGENOM" id="CLU_002774_2_0_1"/>
<dbReference type="InParanoid" id="O14053"/>
<dbReference type="OMA" id="CIYAWRA"/>
<dbReference type="PhylomeDB" id="O14053"/>
<dbReference type="Reactome" id="R-SPO-6791226">
    <property type="pathway name" value="Major pathway of rRNA processing in the nucleolus and cytosol"/>
</dbReference>
<dbReference type="PRO" id="PR:O14053"/>
<dbReference type="Proteomes" id="UP000002485">
    <property type="component" value="Chromosome III"/>
</dbReference>
<dbReference type="GO" id="GO:0032153">
    <property type="term" value="C:cell division site"/>
    <property type="evidence" value="ECO:0007005"/>
    <property type="project" value="PomBase"/>
</dbReference>
<dbReference type="GO" id="GO:0005829">
    <property type="term" value="C:cytosol"/>
    <property type="evidence" value="ECO:0007005"/>
    <property type="project" value="PomBase"/>
</dbReference>
<dbReference type="GO" id="GO:0072686">
    <property type="term" value="C:mitotic spindle"/>
    <property type="evidence" value="ECO:0007005"/>
    <property type="project" value="PomBase"/>
</dbReference>
<dbReference type="GO" id="GO:0005634">
    <property type="term" value="C:nucleus"/>
    <property type="evidence" value="ECO:0007005"/>
    <property type="project" value="PomBase"/>
</dbReference>
<dbReference type="GO" id="GO:0034388">
    <property type="term" value="C:Pwp2p-containing subcomplex of 90S preribosome"/>
    <property type="evidence" value="ECO:0000318"/>
    <property type="project" value="GO_Central"/>
</dbReference>
<dbReference type="GO" id="GO:0032040">
    <property type="term" value="C:small-subunit processome"/>
    <property type="evidence" value="ECO:0000314"/>
    <property type="project" value="PomBase"/>
</dbReference>
<dbReference type="GO" id="GO:0006364">
    <property type="term" value="P:rRNA processing"/>
    <property type="evidence" value="ECO:0000318"/>
    <property type="project" value="GO_Central"/>
</dbReference>
<dbReference type="Gene3D" id="2.130.10.10">
    <property type="entry name" value="YVTN repeat-like/Quinoprotein amine dehydrogenase"/>
    <property type="match status" value="2"/>
</dbReference>
<dbReference type="InterPro" id="IPR007319">
    <property type="entry name" value="SSU_processome_Utp21"/>
</dbReference>
<dbReference type="InterPro" id="IPR015943">
    <property type="entry name" value="WD40/YVTN_repeat-like_dom_sf"/>
</dbReference>
<dbReference type="InterPro" id="IPR019775">
    <property type="entry name" value="WD40_repeat_CS"/>
</dbReference>
<dbReference type="InterPro" id="IPR036322">
    <property type="entry name" value="WD40_repeat_dom_sf"/>
</dbReference>
<dbReference type="InterPro" id="IPR001680">
    <property type="entry name" value="WD40_rpt"/>
</dbReference>
<dbReference type="PANTHER" id="PTHR22840">
    <property type="entry name" value="WD REPEAT-CONTAINING PROTEIN 36"/>
    <property type="match status" value="1"/>
</dbReference>
<dbReference type="PANTHER" id="PTHR22840:SF12">
    <property type="entry name" value="WD REPEAT-CONTAINING PROTEIN 36"/>
    <property type="match status" value="1"/>
</dbReference>
<dbReference type="Pfam" id="PF25171">
    <property type="entry name" value="Beta-prop_WDR36-Utp21_1st"/>
    <property type="match status" value="1"/>
</dbReference>
<dbReference type="Pfam" id="PF25168">
    <property type="entry name" value="Beta-prop_WDR36-Utp21_2nd"/>
    <property type="match status" value="1"/>
</dbReference>
<dbReference type="Pfam" id="PF04192">
    <property type="entry name" value="Utp21"/>
    <property type="match status" value="1"/>
</dbReference>
<dbReference type="SMART" id="SM00320">
    <property type="entry name" value="WD40"/>
    <property type="match status" value="11"/>
</dbReference>
<dbReference type="SUPFAM" id="SSF50978">
    <property type="entry name" value="WD40 repeat-like"/>
    <property type="match status" value="2"/>
</dbReference>
<dbReference type="PROSITE" id="PS00678">
    <property type="entry name" value="WD_REPEATS_1"/>
    <property type="match status" value="3"/>
</dbReference>
<dbReference type="PROSITE" id="PS50082">
    <property type="entry name" value="WD_REPEATS_2"/>
    <property type="match status" value="2"/>
</dbReference>
<dbReference type="PROSITE" id="PS50294">
    <property type="entry name" value="WD_REPEATS_REGION"/>
    <property type="match status" value="1"/>
</dbReference>
<proteinExistence type="inferred from homology"/>